<gene>
    <name type="primary">RPS7C</name>
    <name type="ordered locus">At5g16130</name>
    <name type="ORF">T21H19_509</name>
</gene>
<feature type="chain" id="PRO_0000250185" description="Small ribosomal subunit protein eS7x">
    <location>
        <begin position="1"/>
        <end position="190"/>
    </location>
</feature>
<feature type="coiled-coil region" evidence="1">
    <location>
        <begin position="17"/>
        <end position="50"/>
    </location>
</feature>
<feature type="modified residue" description="N-acetylmethionine" evidence="4">
    <location>
        <position position="1"/>
    </location>
</feature>
<feature type="sequence conflict" description="In Ref. 5; AAM64364." evidence="3" ref="5">
    <original>K</original>
    <variation>N</variation>
    <location>
        <position position="9"/>
    </location>
</feature>
<sequence>MFSAQNKIKKDKNAEPTECEEQVAQALFDLENTNQELKSELKDLYINQAVHMDISGNRKAVVIYVPFRLRKAFRKIHPRLVRELEKKFSGKDVIFVTTRRIMRPPKKGAAVQRPRNRTLTSVHEAMLEDVAFPAEIVGKRTRYRLDGSKIMKVFLDAKEKNNTEYKLETMVGVYRKLTGKDVVFEYPVEA</sequence>
<accession>Q8LD03</accession>
<accession>Q9LF15</accession>
<keyword id="KW-0007">Acetylation</keyword>
<keyword id="KW-0175">Coiled coil</keyword>
<keyword id="KW-1185">Reference proteome</keyword>
<keyword id="KW-0687">Ribonucleoprotein</keyword>
<keyword id="KW-0689">Ribosomal protein</keyword>
<name>RS73_ARATH</name>
<reference key="1">
    <citation type="journal article" date="2000" name="Nature">
        <title>Sequence and analysis of chromosome 5 of the plant Arabidopsis thaliana.</title>
        <authorList>
            <person name="Tabata S."/>
            <person name="Kaneko T."/>
            <person name="Nakamura Y."/>
            <person name="Kotani H."/>
            <person name="Kato T."/>
            <person name="Asamizu E."/>
            <person name="Miyajima N."/>
            <person name="Sasamoto S."/>
            <person name="Kimura T."/>
            <person name="Hosouchi T."/>
            <person name="Kawashima K."/>
            <person name="Kohara M."/>
            <person name="Matsumoto M."/>
            <person name="Matsuno A."/>
            <person name="Muraki A."/>
            <person name="Nakayama S."/>
            <person name="Nakazaki N."/>
            <person name="Naruo K."/>
            <person name="Okumura S."/>
            <person name="Shinpo S."/>
            <person name="Takeuchi C."/>
            <person name="Wada T."/>
            <person name="Watanabe A."/>
            <person name="Yamada M."/>
            <person name="Yasuda M."/>
            <person name="Sato S."/>
            <person name="de la Bastide M."/>
            <person name="Huang E."/>
            <person name="Spiegel L."/>
            <person name="Gnoj L."/>
            <person name="O'Shaughnessy A."/>
            <person name="Preston R."/>
            <person name="Habermann K."/>
            <person name="Murray J."/>
            <person name="Johnson D."/>
            <person name="Rohlfing T."/>
            <person name="Nelson J."/>
            <person name="Stoneking T."/>
            <person name="Pepin K."/>
            <person name="Spieth J."/>
            <person name="Sekhon M."/>
            <person name="Armstrong J."/>
            <person name="Becker M."/>
            <person name="Belter E."/>
            <person name="Cordum H."/>
            <person name="Cordes M."/>
            <person name="Courtney L."/>
            <person name="Courtney W."/>
            <person name="Dante M."/>
            <person name="Du H."/>
            <person name="Edwards J."/>
            <person name="Fryman J."/>
            <person name="Haakensen B."/>
            <person name="Lamar E."/>
            <person name="Latreille P."/>
            <person name="Leonard S."/>
            <person name="Meyer R."/>
            <person name="Mulvaney E."/>
            <person name="Ozersky P."/>
            <person name="Riley A."/>
            <person name="Strowmatt C."/>
            <person name="Wagner-McPherson C."/>
            <person name="Wollam A."/>
            <person name="Yoakum M."/>
            <person name="Bell M."/>
            <person name="Dedhia N."/>
            <person name="Parnell L."/>
            <person name="Shah R."/>
            <person name="Rodriguez M."/>
            <person name="Hoon See L."/>
            <person name="Vil D."/>
            <person name="Baker J."/>
            <person name="Kirchoff K."/>
            <person name="Toth K."/>
            <person name="King L."/>
            <person name="Bahret A."/>
            <person name="Miller B."/>
            <person name="Marra M.A."/>
            <person name="Martienssen R."/>
            <person name="McCombie W.R."/>
            <person name="Wilson R.K."/>
            <person name="Murphy G."/>
            <person name="Bancroft I."/>
            <person name="Volckaert G."/>
            <person name="Wambutt R."/>
            <person name="Duesterhoeft A."/>
            <person name="Stiekema W."/>
            <person name="Pohl T."/>
            <person name="Entian K.-D."/>
            <person name="Terryn N."/>
            <person name="Hartley N."/>
            <person name="Bent E."/>
            <person name="Johnson S."/>
            <person name="Langham S.-A."/>
            <person name="McCullagh B."/>
            <person name="Robben J."/>
            <person name="Grymonprez B."/>
            <person name="Zimmermann W."/>
            <person name="Ramsperger U."/>
            <person name="Wedler H."/>
            <person name="Balke K."/>
            <person name="Wedler E."/>
            <person name="Peters S."/>
            <person name="van Staveren M."/>
            <person name="Dirkse W."/>
            <person name="Mooijman P."/>
            <person name="Klein Lankhorst R."/>
            <person name="Weitzenegger T."/>
            <person name="Bothe G."/>
            <person name="Rose M."/>
            <person name="Hauf J."/>
            <person name="Berneiser S."/>
            <person name="Hempel S."/>
            <person name="Feldpausch M."/>
            <person name="Lamberth S."/>
            <person name="Villarroel R."/>
            <person name="Gielen J."/>
            <person name="Ardiles W."/>
            <person name="Bents O."/>
            <person name="Lemcke K."/>
            <person name="Kolesov G."/>
            <person name="Mayer K.F.X."/>
            <person name="Rudd S."/>
            <person name="Schoof H."/>
            <person name="Schueller C."/>
            <person name="Zaccaria P."/>
            <person name="Mewes H.-W."/>
            <person name="Bevan M."/>
            <person name="Fransz P.F."/>
        </authorList>
    </citation>
    <scope>NUCLEOTIDE SEQUENCE [LARGE SCALE GENOMIC DNA]</scope>
    <source>
        <strain>cv. Columbia</strain>
    </source>
</reference>
<reference key="2">
    <citation type="journal article" date="2017" name="Plant J.">
        <title>Araport11: a complete reannotation of the Arabidopsis thaliana reference genome.</title>
        <authorList>
            <person name="Cheng C.Y."/>
            <person name="Krishnakumar V."/>
            <person name="Chan A.P."/>
            <person name="Thibaud-Nissen F."/>
            <person name="Schobel S."/>
            <person name="Town C.D."/>
        </authorList>
    </citation>
    <scope>GENOME REANNOTATION</scope>
    <source>
        <strain>cv. Columbia</strain>
    </source>
</reference>
<reference key="3">
    <citation type="submission" date="2006-03" db="EMBL/GenBank/DDBJ databases">
        <title>Arabidopsis ORF clones.</title>
        <authorList>
            <person name="Shinn P."/>
            <person name="Chen H."/>
            <person name="Kim C.J."/>
            <person name="Ecker J.R."/>
        </authorList>
    </citation>
    <scope>NUCLEOTIDE SEQUENCE [LARGE SCALE MRNA]</scope>
    <source>
        <strain>cv. Columbia</strain>
    </source>
</reference>
<reference key="4">
    <citation type="submission" date="2006-07" db="EMBL/GenBank/DDBJ databases">
        <title>Large-scale analysis of RIKEN Arabidopsis full-length (RAFL) cDNAs.</title>
        <authorList>
            <person name="Totoki Y."/>
            <person name="Seki M."/>
            <person name="Ishida J."/>
            <person name="Nakajima M."/>
            <person name="Enju A."/>
            <person name="Kamiya A."/>
            <person name="Narusaka M."/>
            <person name="Shin-i T."/>
            <person name="Nakagawa M."/>
            <person name="Sakamoto N."/>
            <person name="Oishi K."/>
            <person name="Kohara Y."/>
            <person name="Kobayashi M."/>
            <person name="Toyoda A."/>
            <person name="Sakaki Y."/>
            <person name="Sakurai T."/>
            <person name="Iida K."/>
            <person name="Akiyama K."/>
            <person name="Satou M."/>
            <person name="Toyoda T."/>
            <person name="Konagaya A."/>
            <person name="Carninci P."/>
            <person name="Kawai J."/>
            <person name="Hayashizaki Y."/>
            <person name="Shinozaki K."/>
        </authorList>
    </citation>
    <scope>NUCLEOTIDE SEQUENCE [LARGE SCALE MRNA]</scope>
    <source>
        <strain>cv. Columbia</strain>
    </source>
</reference>
<reference key="5">
    <citation type="submission" date="2002-03" db="EMBL/GenBank/DDBJ databases">
        <title>Full-length cDNA from Arabidopsis thaliana.</title>
        <authorList>
            <person name="Brover V.V."/>
            <person name="Troukhan M.E."/>
            <person name="Alexandrov N.A."/>
            <person name="Lu Y.-P."/>
            <person name="Flavell R.B."/>
            <person name="Feldmann K.A."/>
        </authorList>
    </citation>
    <scope>NUCLEOTIDE SEQUENCE [LARGE SCALE MRNA]</scope>
</reference>
<reference key="6">
    <citation type="journal article" date="2001" name="Plant Physiol.">
        <title>The organization of cytoplasmic ribosomal protein genes in the Arabidopsis genome.</title>
        <authorList>
            <person name="Barakat A."/>
            <person name="Szick-Miranda K."/>
            <person name="Chang I.-F."/>
            <person name="Guyot R."/>
            <person name="Blanc G."/>
            <person name="Cooke R."/>
            <person name="Delseny M."/>
            <person name="Bailey-Serres J."/>
        </authorList>
    </citation>
    <scope>GENE FAMILY ORGANIZATION</scope>
    <scope>NOMENCLATURE</scope>
</reference>
<reference key="7">
    <citation type="journal article" date="2012" name="Mol. Cell. Proteomics">
        <title>Comparative large-scale characterisation of plant vs. mammal proteins reveals similar and idiosyncratic N-alpha acetylation features.</title>
        <authorList>
            <person name="Bienvenut W.V."/>
            <person name="Sumpton D."/>
            <person name="Martinez A."/>
            <person name="Lilla S."/>
            <person name="Espagne C."/>
            <person name="Meinnel T."/>
            <person name="Giglione C."/>
        </authorList>
    </citation>
    <scope>ACETYLATION [LARGE SCALE ANALYSIS] AT MET-1</scope>
    <scope>IDENTIFICATION BY MASS SPECTROMETRY [LARGE SCALE ANALYSIS]</scope>
</reference>
<reference key="8">
    <citation type="journal article" date="2023" name="Plant Cell">
        <title>An updated nomenclature for plant ribosomal protein genes.</title>
        <authorList>
            <person name="Scarpin M.R."/>
            <person name="Busche M."/>
            <person name="Martinez R.E."/>
            <person name="Harper L.C."/>
            <person name="Reiser L."/>
            <person name="Szakonyi D."/>
            <person name="Merchante C."/>
            <person name="Lan T."/>
            <person name="Xiong W."/>
            <person name="Mo B."/>
            <person name="Tang G."/>
            <person name="Chen X."/>
            <person name="Bailey-Serres J."/>
            <person name="Browning K.S."/>
            <person name="Brunkard J.O."/>
        </authorList>
    </citation>
    <scope>NOMENCLATURE</scope>
</reference>
<dbReference type="EMBL" id="AL391148">
    <property type="protein sequence ID" value="CAC01854.1"/>
    <property type="molecule type" value="Genomic_DNA"/>
</dbReference>
<dbReference type="EMBL" id="CP002688">
    <property type="protein sequence ID" value="AED92250.1"/>
    <property type="molecule type" value="Genomic_DNA"/>
</dbReference>
<dbReference type="EMBL" id="BT024914">
    <property type="protein sequence ID" value="ABD94070.1"/>
    <property type="molecule type" value="mRNA"/>
</dbReference>
<dbReference type="EMBL" id="AK227242">
    <property type="protein sequence ID" value="BAE99279.1"/>
    <property type="molecule type" value="mRNA"/>
</dbReference>
<dbReference type="EMBL" id="AY086292">
    <property type="protein sequence ID" value="AAM64364.1"/>
    <property type="molecule type" value="mRNA"/>
</dbReference>
<dbReference type="PIR" id="T51483">
    <property type="entry name" value="T51483"/>
</dbReference>
<dbReference type="RefSeq" id="NP_197117.1">
    <property type="nucleotide sequence ID" value="NM_121618.4"/>
</dbReference>
<dbReference type="SMR" id="Q8LD03"/>
<dbReference type="BioGRID" id="16746">
    <property type="interactions" value="5"/>
</dbReference>
<dbReference type="FunCoup" id="Q8LD03">
    <property type="interactions" value="4061"/>
</dbReference>
<dbReference type="STRING" id="3702.Q8LD03"/>
<dbReference type="iPTMnet" id="Q8LD03"/>
<dbReference type="PaxDb" id="3702-AT5G16130.1"/>
<dbReference type="ProteomicsDB" id="226759"/>
<dbReference type="EnsemblPlants" id="AT5G16130.1">
    <property type="protein sequence ID" value="AT5G16130.1"/>
    <property type="gene ID" value="AT5G16130"/>
</dbReference>
<dbReference type="GeneID" id="831470"/>
<dbReference type="Gramene" id="AT5G16130.1">
    <property type="protein sequence ID" value="AT5G16130.1"/>
    <property type="gene ID" value="AT5G16130"/>
</dbReference>
<dbReference type="KEGG" id="ath:AT5G16130"/>
<dbReference type="Araport" id="AT5G16130"/>
<dbReference type="TAIR" id="AT5G16130"/>
<dbReference type="eggNOG" id="KOG3320">
    <property type="taxonomic scope" value="Eukaryota"/>
</dbReference>
<dbReference type="HOGENOM" id="CLU_088621_1_2_1"/>
<dbReference type="InParanoid" id="Q8LD03"/>
<dbReference type="OMA" id="IQMDVAN"/>
<dbReference type="OrthoDB" id="1724687at2759"/>
<dbReference type="PhylomeDB" id="Q8LD03"/>
<dbReference type="CD-CODE" id="4299E36E">
    <property type="entry name" value="Nucleolus"/>
</dbReference>
<dbReference type="PRO" id="PR:Q8LD03"/>
<dbReference type="Proteomes" id="UP000006548">
    <property type="component" value="Chromosome 5"/>
</dbReference>
<dbReference type="ExpressionAtlas" id="Q8LD03">
    <property type="expression patterns" value="baseline and differential"/>
</dbReference>
<dbReference type="GO" id="GO:0022626">
    <property type="term" value="C:cytosolic ribosome"/>
    <property type="evidence" value="ECO:0007005"/>
    <property type="project" value="TAIR"/>
</dbReference>
<dbReference type="GO" id="GO:0022627">
    <property type="term" value="C:cytosolic small ribosomal subunit"/>
    <property type="evidence" value="ECO:0007005"/>
    <property type="project" value="TAIR"/>
</dbReference>
<dbReference type="GO" id="GO:0005730">
    <property type="term" value="C:nucleolus"/>
    <property type="evidence" value="ECO:0007005"/>
    <property type="project" value="TAIR"/>
</dbReference>
<dbReference type="GO" id="GO:0009506">
    <property type="term" value="C:plasmodesma"/>
    <property type="evidence" value="ECO:0007005"/>
    <property type="project" value="TAIR"/>
</dbReference>
<dbReference type="GO" id="GO:0009536">
    <property type="term" value="C:plastid"/>
    <property type="evidence" value="ECO:0007005"/>
    <property type="project" value="TAIR"/>
</dbReference>
<dbReference type="GO" id="GO:0003729">
    <property type="term" value="F:mRNA binding"/>
    <property type="evidence" value="ECO:0000314"/>
    <property type="project" value="TAIR"/>
</dbReference>
<dbReference type="GO" id="GO:0003735">
    <property type="term" value="F:structural constituent of ribosome"/>
    <property type="evidence" value="ECO:0000314"/>
    <property type="project" value="CAFA"/>
</dbReference>
<dbReference type="GO" id="GO:0006412">
    <property type="term" value="P:translation"/>
    <property type="evidence" value="ECO:0007669"/>
    <property type="project" value="InterPro"/>
</dbReference>
<dbReference type="InterPro" id="IPR000554">
    <property type="entry name" value="Ribosomal_eS7"/>
</dbReference>
<dbReference type="InterPro" id="IPR047861">
    <property type="entry name" value="Ribosomal_eS7_CS"/>
</dbReference>
<dbReference type="PANTHER" id="PTHR11278">
    <property type="entry name" value="40S RIBOSOMAL PROTEIN S7"/>
    <property type="match status" value="1"/>
</dbReference>
<dbReference type="PANTHER" id="PTHR11278:SF10">
    <property type="entry name" value="SMALL RIBOSOMAL SUBUNIT PROTEIN ES7X"/>
    <property type="match status" value="1"/>
</dbReference>
<dbReference type="Pfam" id="PF01251">
    <property type="entry name" value="Ribosomal_S7e"/>
    <property type="match status" value="1"/>
</dbReference>
<dbReference type="PROSITE" id="PS00948">
    <property type="entry name" value="RIBOSOMAL_S7E"/>
    <property type="match status" value="1"/>
</dbReference>
<proteinExistence type="evidence at protein level"/>
<evidence type="ECO:0000255" key="1"/>
<evidence type="ECO:0000303" key="2">
    <source>
    </source>
</evidence>
<evidence type="ECO:0000305" key="3"/>
<evidence type="ECO:0007744" key="4">
    <source>
    </source>
</evidence>
<organism>
    <name type="scientific">Arabidopsis thaliana</name>
    <name type="common">Mouse-ear cress</name>
    <dbReference type="NCBI Taxonomy" id="3702"/>
    <lineage>
        <taxon>Eukaryota</taxon>
        <taxon>Viridiplantae</taxon>
        <taxon>Streptophyta</taxon>
        <taxon>Embryophyta</taxon>
        <taxon>Tracheophyta</taxon>
        <taxon>Spermatophyta</taxon>
        <taxon>Magnoliopsida</taxon>
        <taxon>eudicotyledons</taxon>
        <taxon>Gunneridae</taxon>
        <taxon>Pentapetalae</taxon>
        <taxon>rosids</taxon>
        <taxon>malvids</taxon>
        <taxon>Brassicales</taxon>
        <taxon>Brassicaceae</taxon>
        <taxon>Camelineae</taxon>
        <taxon>Arabidopsis</taxon>
    </lineage>
</organism>
<comment type="similarity">
    <text evidence="3">Belongs to the eukaryotic ribosomal protein eS7 family.</text>
</comment>
<protein>
    <recommendedName>
        <fullName evidence="2">Small ribosomal subunit protein eS7x</fullName>
    </recommendedName>
    <alternativeName>
        <fullName>40S ribosomal protein S7-3</fullName>
    </alternativeName>
</protein>